<accession>O15060</accession>
<accession>A7MD38</accession>
<accession>Q9UD98</accession>
<feature type="chain" id="PRO_0000047744" description="Zinc finger and BTB domain-containing protein 39">
    <location>
        <begin position="1"/>
        <end position="712"/>
    </location>
</feature>
<feature type="domain" description="BTB" evidence="1">
    <location>
        <begin position="30"/>
        <end position="96"/>
    </location>
</feature>
<feature type="zinc finger region" description="C2H2-type 1" evidence="2">
    <location>
        <begin position="372"/>
        <end position="394"/>
    </location>
</feature>
<feature type="zinc finger region" description="C2H2-type 2; atypical" evidence="2">
    <location>
        <begin position="400"/>
        <end position="422"/>
    </location>
</feature>
<feature type="zinc finger region" description="C2H2-type 3; atypical" evidence="2">
    <location>
        <begin position="480"/>
        <end position="502"/>
    </location>
</feature>
<feature type="zinc finger region" description="C2H2-type 4" evidence="2">
    <location>
        <begin position="508"/>
        <end position="530"/>
    </location>
</feature>
<feature type="zinc finger region" description="C2H2-type 5" evidence="2">
    <location>
        <begin position="538"/>
        <end position="560"/>
    </location>
</feature>
<feature type="zinc finger region" description="C2H2-type 6" evidence="2">
    <location>
        <begin position="605"/>
        <end position="627"/>
    </location>
</feature>
<feature type="zinc finger region" description="C2H2-type 7" evidence="2">
    <location>
        <begin position="633"/>
        <end position="655"/>
    </location>
</feature>
<feature type="zinc finger region" description="C2H2-type 8; atypical" evidence="2">
    <location>
        <begin position="661"/>
        <end position="683"/>
    </location>
</feature>
<feature type="region of interest" description="Disordered" evidence="3">
    <location>
        <begin position="129"/>
        <end position="162"/>
    </location>
</feature>
<feature type="region of interest" description="Disordered" evidence="3">
    <location>
        <begin position="176"/>
        <end position="224"/>
    </location>
</feature>
<feature type="region of interest" description="Disordered" evidence="3">
    <location>
        <begin position="236"/>
        <end position="260"/>
    </location>
</feature>
<feature type="compositionally biased region" description="Polar residues" evidence="3">
    <location>
        <begin position="134"/>
        <end position="147"/>
    </location>
</feature>
<feature type="cross-link" description="Glycyl lysine isopeptide (Lys-Gly) (interchain with G-Cter in SUMO2)" evidence="5">
    <location>
        <position position="183"/>
    </location>
</feature>
<feature type="cross-link" description="Glycyl lysine isopeptide (Lys-Gly) (interchain with G-Cter in SUMO2)" evidence="5">
    <location>
        <position position="439"/>
    </location>
</feature>
<feature type="sequence variant" id="VAR_019985" description="In dbSNP:rs3741576.">
    <original>P</original>
    <variation>A</variation>
    <location>
        <position position="689"/>
    </location>
</feature>
<gene>
    <name type="primary">ZBTB39</name>
    <name type="synonym">KIAA0352</name>
</gene>
<protein>
    <recommendedName>
        <fullName>Zinc finger and BTB domain-containing protein 39</fullName>
    </recommendedName>
</protein>
<comment type="function">
    <text>May be involved in transcriptional regulation.</text>
</comment>
<comment type="interaction">
    <interactant intactId="EBI-9995672">
        <id>O15060</id>
    </interactant>
    <interactant intactId="EBI-745213">
        <id>P29972</id>
        <label>AQP1</label>
    </interactant>
    <organismsDiffer>false</organismsDiffer>
    <experiments>3</experiments>
</comment>
<comment type="interaction">
    <interactant intactId="EBI-9995672">
        <id>O15060</id>
    </interactant>
    <interactant intactId="EBI-1052570">
        <id>O95995</id>
        <label>GAS8</label>
    </interactant>
    <organismsDiffer>false</organismsDiffer>
    <experiments>3</experiments>
</comment>
<comment type="interaction">
    <interactant intactId="EBI-9995672">
        <id>O15060</id>
    </interactant>
    <interactant intactId="EBI-17178971">
        <id>Q14005-2</id>
        <label>IL16</label>
    </interactant>
    <organismsDiffer>false</organismsDiffer>
    <experiments>3</experiments>
</comment>
<comment type="interaction">
    <interactant intactId="EBI-9995672">
        <id>O15060</id>
    </interactant>
    <interactant intactId="EBI-710124">
        <id>O60341</id>
        <label>KDM1A</label>
    </interactant>
    <organismsDiffer>false</organismsDiffer>
    <experiments>3</experiments>
</comment>
<comment type="interaction">
    <interactant intactId="EBI-9995672">
        <id>O15060</id>
    </interactant>
    <interactant intactId="EBI-746202">
        <id>O00444</id>
        <label>PLK4</label>
    </interactant>
    <organismsDiffer>false</organismsDiffer>
    <experiments>3</experiments>
</comment>
<comment type="interaction">
    <interactant intactId="EBI-9995672">
        <id>O15060</id>
    </interactant>
    <interactant intactId="EBI-357648">
        <id>Q13200</id>
        <label>PSMD2</label>
    </interactant>
    <organismsDiffer>false</organismsDiffer>
    <experiments>3</experiments>
</comment>
<comment type="interaction">
    <interactant intactId="EBI-9995672">
        <id>O15060</id>
    </interactant>
    <interactant intactId="EBI-473220">
        <id>P61956</id>
        <label>SUMO2</label>
    </interactant>
    <organismsDiffer>false</organismsDiffer>
    <experiments>3</experiments>
</comment>
<comment type="interaction">
    <interactant intactId="EBI-9995672">
        <id>O15060</id>
    </interactant>
    <interactant intactId="EBI-474067">
        <id>P55854</id>
        <label>SUMO3</label>
    </interactant>
    <organismsDiffer>false</organismsDiffer>
    <experiments>3</experiments>
</comment>
<comment type="interaction">
    <interactant intactId="EBI-9995672">
        <id>O15060</id>
    </interactant>
    <interactant intactId="EBI-11955057">
        <id>Q8N8B7-2</id>
        <label>TCEANC</label>
    </interactant>
    <organismsDiffer>false</organismsDiffer>
    <experiments>3</experiments>
</comment>
<comment type="interaction">
    <interactant intactId="EBI-9995672">
        <id>O15060</id>
    </interactant>
    <interactant intactId="EBI-725997">
        <id>Q8WV44</id>
        <label>TRIM41</label>
    </interactant>
    <organismsDiffer>false</organismsDiffer>
    <experiments>3</experiments>
</comment>
<comment type="interaction">
    <interactant intactId="EBI-9995672">
        <id>O15060</id>
    </interactant>
    <interactant intactId="EBI-744794">
        <id>Q9BZW7</id>
        <label>TSGA10</label>
    </interactant>
    <organismsDiffer>false</organismsDiffer>
    <experiments>3</experiments>
</comment>
<comment type="subcellular location">
    <subcellularLocation>
        <location evidence="4">Nucleus</location>
    </subcellularLocation>
</comment>
<comment type="similarity">
    <text evidence="4">Belongs to the krueppel C2H2-type zinc-finger protein family.</text>
</comment>
<comment type="sequence caution" evidence="4">
    <conflict type="erroneous initiation">
        <sequence resource="EMBL-CDS" id="BAA20809"/>
    </conflict>
</comment>
<keyword id="KW-0238">DNA-binding</keyword>
<keyword id="KW-1017">Isopeptide bond</keyword>
<keyword id="KW-0479">Metal-binding</keyword>
<keyword id="KW-0539">Nucleus</keyword>
<keyword id="KW-1267">Proteomics identification</keyword>
<keyword id="KW-1185">Reference proteome</keyword>
<keyword id="KW-0677">Repeat</keyword>
<keyword id="KW-0804">Transcription</keyword>
<keyword id="KW-0805">Transcription regulation</keyword>
<keyword id="KW-0832">Ubl conjugation</keyword>
<keyword id="KW-0862">Zinc</keyword>
<keyword id="KW-0863">Zinc-finger</keyword>
<proteinExistence type="evidence at protein level"/>
<organism>
    <name type="scientific">Homo sapiens</name>
    <name type="common">Human</name>
    <dbReference type="NCBI Taxonomy" id="9606"/>
    <lineage>
        <taxon>Eukaryota</taxon>
        <taxon>Metazoa</taxon>
        <taxon>Chordata</taxon>
        <taxon>Craniata</taxon>
        <taxon>Vertebrata</taxon>
        <taxon>Euteleostomi</taxon>
        <taxon>Mammalia</taxon>
        <taxon>Eutheria</taxon>
        <taxon>Euarchontoglires</taxon>
        <taxon>Primates</taxon>
        <taxon>Haplorrhini</taxon>
        <taxon>Catarrhini</taxon>
        <taxon>Hominidae</taxon>
        <taxon>Homo</taxon>
    </lineage>
</organism>
<name>ZBT39_HUMAN</name>
<sequence length="712" mass="79001">MGMRIKLQSTNHPNNLLKELNKCRLSETMCDVTIVVGSRSFPAHKAVLACAAGYFQNLFLNTGLDAARTYVVDFITPANFEKVLSFVYTSELFTDLINVGVIYEVAERLGMEDLLQACHSTFPDLESTARAKPLTSTSESHSGTLSCPSAEPAHPLGELRGGGDYLGADRNYVLPSDAGGSYKEEEKNVASDANHSLHLPQPPPPPPKTEDHDTPAPFTSIPSMMTQPLLGTVSTGIQTSTSSCQPYKVQSNGDFSKNSFLTPDNAVDITTGTNSCLSNSEHSKDPGFGQMDELQLEDLGDDDLQFEDPAEDIGTTEEVIELSDDSEDELAFGENDNRENKAMPCQVCKKVLEPNIQLIRQHARDHVDLLTGNCKVCETHFQDRNSRVTHVLSHIGIFLFSCDMCETKFFTQWQLTLHRRDGIFENNIIVHPNDPLPGKLGLFSGAASPELKCAACGKVLAKDFHVVRGHILDHLNLKGQACSVCDQRHLNLCSLMWHTLSHLGISVFSCSVCANSFVDWHLLEKHMAVHQSLEDALFHCRLCSQSFKSEAAYRYHVSQHKCNSGLDARPGFGLQHPALQKRKLPAEEFLGEELALQGQPGNSKYSCKVCGKRFAHTSEFNYHRRIHTGEKPYQCKVCHKFFRGRSTIKCHLKTHSGALMYRCTVCGHYSSTLNLMSKHVGVHKGSLPPDFTIEQTFMYIIHSKEADKNPDS</sequence>
<dbReference type="EMBL" id="AB002350">
    <property type="protein sequence ID" value="BAA20809.2"/>
    <property type="status" value="ALT_INIT"/>
    <property type="molecule type" value="mRNA"/>
</dbReference>
<dbReference type="EMBL" id="AK292468">
    <property type="protein sequence ID" value="BAF85157.1"/>
    <property type="molecule type" value="mRNA"/>
</dbReference>
<dbReference type="EMBL" id="CH471054">
    <property type="protein sequence ID" value="EAW96971.1"/>
    <property type="molecule type" value="Genomic_DNA"/>
</dbReference>
<dbReference type="EMBL" id="BC140890">
    <property type="protein sequence ID" value="AAI40891.1"/>
    <property type="molecule type" value="mRNA"/>
</dbReference>
<dbReference type="EMBL" id="BC146867">
    <property type="protein sequence ID" value="AAI46868.1"/>
    <property type="molecule type" value="mRNA"/>
</dbReference>
<dbReference type="EMBL" id="BC152461">
    <property type="protein sequence ID" value="AAI52462.1"/>
    <property type="molecule type" value="mRNA"/>
</dbReference>
<dbReference type="CCDS" id="CCDS31839.1"/>
<dbReference type="RefSeq" id="NP_055645.1">
    <property type="nucleotide sequence ID" value="NM_014830.3"/>
</dbReference>
<dbReference type="SMR" id="O15060"/>
<dbReference type="BioGRID" id="115211">
    <property type="interactions" value="32"/>
</dbReference>
<dbReference type="FunCoup" id="O15060">
    <property type="interactions" value="613"/>
</dbReference>
<dbReference type="IntAct" id="O15060">
    <property type="interactions" value="19"/>
</dbReference>
<dbReference type="STRING" id="9606.ENSP00000300101"/>
<dbReference type="iPTMnet" id="O15060"/>
<dbReference type="PhosphoSitePlus" id="O15060"/>
<dbReference type="BioMuta" id="ZBTB39"/>
<dbReference type="jPOST" id="O15060"/>
<dbReference type="MassIVE" id="O15060"/>
<dbReference type="PaxDb" id="9606-ENSP00000300101"/>
<dbReference type="PeptideAtlas" id="O15060"/>
<dbReference type="ProteomicsDB" id="48410"/>
<dbReference type="Pumba" id="O15060"/>
<dbReference type="ABCD" id="O15060">
    <property type="antibodies" value="7 sequenced antibodies"/>
</dbReference>
<dbReference type="Antibodypedia" id="28418">
    <property type="antibodies" value="122 antibodies from 19 providers"/>
</dbReference>
<dbReference type="DNASU" id="9880"/>
<dbReference type="Ensembl" id="ENST00000300101.3">
    <property type="protein sequence ID" value="ENSP00000300101.2"/>
    <property type="gene ID" value="ENSG00000166860.3"/>
</dbReference>
<dbReference type="GeneID" id="9880"/>
<dbReference type="KEGG" id="hsa:9880"/>
<dbReference type="MANE-Select" id="ENST00000300101.3">
    <property type="protein sequence ID" value="ENSP00000300101.2"/>
    <property type="RefSeq nucleotide sequence ID" value="NM_014830.3"/>
    <property type="RefSeq protein sequence ID" value="NP_055645.1"/>
</dbReference>
<dbReference type="UCSC" id="uc001sml.3">
    <property type="organism name" value="human"/>
</dbReference>
<dbReference type="AGR" id="HGNC:29014"/>
<dbReference type="CTD" id="9880"/>
<dbReference type="DisGeNET" id="9880"/>
<dbReference type="GeneCards" id="ZBTB39"/>
<dbReference type="HGNC" id="HGNC:29014">
    <property type="gene designation" value="ZBTB39"/>
</dbReference>
<dbReference type="HPA" id="ENSG00000166860">
    <property type="expression patterns" value="Low tissue specificity"/>
</dbReference>
<dbReference type="MIM" id="619384">
    <property type="type" value="gene"/>
</dbReference>
<dbReference type="neXtProt" id="NX_O15060"/>
<dbReference type="OpenTargets" id="ENSG00000166860"/>
<dbReference type="PharmGKB" id="PA142670543"/>
<dbReference type="VEuPathDB" id="HostDB:ENSG00000166860"/>
<dbReference type="eggNOG" id="KOG1721">
    <property type="taxonomic scope" value="Eukaryota"/>
</dbReference>
<dbReference type="GeneTree" id="ENSGT00940000160722"/>
<dbReference type="HOGENOM" id="CLU_391778_0_0_1"/>
<dbReference type="InParanoid" id="O15060"/>
<dbReference type="OMA" id="SSFVDWH"/>
<dbReference type="OrthoDB" id="8908278at2759"/>
<dbReference type="PAN-GO" id="O15060">
    <property type="GO annotations" value="4 GO annotations based on evolutionary models"/>
</dbReference>
<dbReference type="PhylomeDB" id="O15060"/>
<dbReference type="TreeFam" id="TF350825"/>
<dbReference type="PathwayCommons" id="O15060"/>
<dbReference type="SignaLink" id="O15060"/>
<dbReference type="BioGRID-ORCS" id="9880">
    <property type="hits" value="54 hits in 1198 CRISPR screens"/>
</dbReference>
<dbReference type="GenomeRNAi" id="9880"/>
<dbReference type="Pharos" id="O15060">
    <property type="development level" value="Tdark"/>
</dbReference>
<dbReference type="PRO" id="PR:O15060"/>
<dbReference type="Proteomes" id="UP000005640">
    <property type="component" value="Chromosome 12"/>
</dbReference>
<dbReference type="RNAct" id="O15060">
    <property type="molecule type" value="protein"/>
</dbReference>
<dbReference type="Bgee" id="ENSG00000166860">
    <property type="expression patterns" value="Expressed in oocyte and 131 other cell types or tissues"/>
</dbReference>
<dbReference type="GO" id="GO:0005654">
    <property type="term" value="C:nucleoplasm"/>
    <property type="evidence" value="ECO:0000318"/>
    <property type="project" value="GO_Central"/>
</dbReference>
<dbReference type="GO" id="GO:0001227">
    <property type="term" value="F:DNA-binding transcription repressor activity, RNA polymerase II-specific"/>
    <property type="evidence" value="ECO:0000318"/>
    <property type="project" value="GO_Central"/>
</dbReference>
<dbReference type="GO" id="GO:0000978">
    <property type="term" value="F:RNA polymerase II cis-regulatory region sequence-specific DNA binding"/>
    <property type="evidence" value="ECO:0000318"/>
    <property type="project" value="GO_Central"/>
</dbReference>
<dbReference type="GO" id="GO:0008270">
    <property type="term" value="F:zinc ion binding"/>
    <property type="evidence" value="ECO:0007669"/>
    <property type="project" value="UniProtKB-KW"/>
</dbReference>
<dbReference type="GO" id="GO:0000122">
    <property type="term" value="P:negative regulation of transcription by RNA polymerase II"/>
    <property type="evidence" value="ECO:0000318"/>
    <property type="project" value="GO_Central"/>
</dbReference>
<dbReference type="GO" id="GO:0001817">
    <property type="term" value="P:regulation of cytokine production"/>
    <property type="evidence" value="ECO:0000318"/>
    <property type="project" value="GO_Central"/>
</dbReference>
<dbReference type="GO" id="GO:0002682">
    <property type="term" value="P:regulation of immune system process"/>
    <property type="evidence" value="ECO:0000318"/>
    <property type="project" value="GO_Central"/>
</dbReference>
<dbReference type="CDD" id="cd18224">
    <property type="entry name" value="BTB_POZ_ZBTB39"/>
    <property type="match status" value="1"/>
</dbReference>
<dbReference type="FunFam" id="3.30.160.60:FF:001792">
    <property type="entry name" value="Zinc finger and BTB domain-containing 40"/>
    <property type="match status" value="1"/>
</dbReference>
<dbReference type="FunFam" id="3.30.160.60:FF:001375">
    <property type="entry name" value="Zinc finger and BTB domain-containing protein 39"/>
    <property type="match status" value="1"/>
</dbReference>
<dbReference type="FunFam" id="3.30.710.10:FF:000104">
    <property type="entry name" value="zinc finger and BTB domain-containing protein 39"/>
    <property type="match status" value="1"/>
</dbReference>
<dbReference type="FunFam" id="3.30.160.60:FF:000446">
    <property type="entry name" value="Zinc finger protein"/>
    <property type="match status" value="1"/>
</dbReference>
<dbReference type="Gene3D" id="3.30.160.60">
    <property type="entry name" value="Classic Zinc Finger"/>
    <property type="match status" value="4"/>
</dbReference>
<dbReference type="Gene3D" id="3.30.710.10">
    <property type="entry name" value="Potassium Channel Kv1.1, Chain A"/>
    <property type="match status" value="1"/>
</dbReference>
<dbReference type="InterPro" id="IPR000210">
    <property type="entry name" value="BTB/POZ_dom"/>
</dbReference>
<dbReference type="InterPro" id="IPR011333">
    <property type="entry name" value="SKP1/BTB/POZ_sf"/>
</dbReference>
<dbReference type="InterPro" id="IPR047989">
    <property type="entry name" value="ZBTB39_BTB_POZ"/>
</dbReference>
<dbReference type="InterPro" id="IPR036236">
    <property type="entry name" value="Znf_C2H2_sf"/>
</dbReference>
<dbReference type="InterPro" id="IPR013087">
    <property type="entry name" value="Znf_C2H2_type"/>
</dbReference>
<dbReference type="PANTHER" id="PTHR24394:SF43">
    <property type="entry name" value="ZINC FINGER AND BTB DOMAIN CONTAINING 39"/>
    <property type="match status" value="1"/>
</dbReference>
<dbReference type="PANTHER" id="PTHR24394">
    <property type="entry name" value="ZINC FINGER PROTEIN"/>
    <property type="match status" value="1"/>
</dbReference>
<dbReference type="Pfam" id="PF00651">
    <property type="entry name" value="BTB"/>
    <property type="match status" value="1"/>
</dbReference>
<dbReference type="Pfam" id="PF00096">
    <property type="entry name" value="zf-C2H2"/>
    <property type="match status" value="2"/>
</dbReference>
<dbReference type="SMART" id="SM00225">
    <property type="entry name" value="BTB"/>
    <property type="match status" value="1"/>
</dbReference>
<dbReference type="SMART" id="SM00355">
    <property type="entry name" value="ZnF_C2H2"/>
    <property type="match status" value="9"/>
</dbReference>
<dbReference type="SUPFAM" id="SSF57667">
    <property type="entry name" value="beta-beta-alpha zinc fingers"/>
    <property type="match status" value="5"/>
</dbReference>
<dbReference type="SUPFAM" id="SSF54695">
    <property type="entry name" value="POZ domain"/>
    <property type="match status" value="1"/>
</dbReference>
<dbReference type="PROSITE" id="PS50097">
    <property type="entry name" value="BTB"/>
    <property type="match status" value="1"/>
</dbReference>
<dbReference type="PROSITE" id="PS00028">
    <property type="entry name" value="ZINC_FINGER_C2H2_1"/>
    <property type="match status" value="5"/>
</dbReference>
<dbReference type="PROSITE" id="PS50157">
    <property type="entry name" value="ZINC_FINGER_C2H2_2"/>
    <property type="match status" value="5"/>
</dbReference>
<reference key="1">
    <citation type="journal article" date="1997" name="DNA Res.">
        <title>Prediction of the coding sequences of unidentified human genes. VII. The complete sequences of 100 new cDNA clones from brain which can code for large proteins in vitro.</title>
        <authorList>
            <person name="Nagase T."/>
            <person name="Ishikawa K."/>
            <person name="Nakajima D."/>
            <person name="Ohira M."/>
            <person name="Seki N."/>
            <person name="Miyajima N."/>
            <person name="Tanaka A."/>
            <person name="Kotani H."/>
            <person name="Nomura N."/>
            <person name="Ohara O."/>
        </authorList>
    </citation>
    <scope>NUCLEOTIDE SEQUENCE [LARGE SCALE MRNA]</scope>
    <source>
        <tissue>Brain</tissue>
    </source>
</reference>
<reference key="2">
    <citation type="journal article" date="2004" name="Nat. Genet.">
        <title>Complete sequencing and characterization of 21,243 full-length human cDNAs.</title>
        <authorList>
            <person name="Ota T."/>
            <person name="Suzuki Y."/>
            <person name="Nishikawa T."/>
            <person name="Otsuki T."/>
            <person name="Sugiyama T."/>
            <person name="Irie R."/>
            <person name="Wakamatsu A."/>
            <person name="Hayashi K."/>
            <person name="Sato H."/>
            <person name="Nagai K."/>
            <person name="Kimura K."/>
            <person name="Makita H."/>
            <person name="Sekine M."/>
            <person name="Obayashi M."/>
            <person name="Nishi T."/>
            <person name="Shibahara T."/>
            <person name="Tanaka T."/>
            <person name="Ishii S."/>
            <person name="Yamamoto J."/>
            <person name="Saito K."/>
            <person name="Kawai Y."/>
            <person name="Isono Y."/>
            <person name="Nakamura Y."/>
            <person name="Nagahari K."/>
            <person name="Murakami K."/>
            <person name="Yasuda T."/>
            <person name="Iwayanagi T."/>
            <person name="Wagatsuma M."/>
            <person name="Shiratori A."/>
            <person name="Sudo H."/>
            <person name="Hosoiri T."/>
            <person name="Kaku Y."/>
            <person name="Kodaira H."/>
            <person name="Kondo H."/>
            <person name="Sugawara M."/>
            <person name="Takahashi M."/>
            <person name="Kanda K."/>
            <person name="Yokoi T."/>
            <person name="Furuya T."/>
            <person name="Kikkawa E."/>
            <person name="Omura Y."/>
            <person name="Abe K."/>
            <person name="Kamihara K."/>
            <person name="Katsuta N."/>
            <person name="Sato K."/>
            <person name="Tanikawa M."/>
            <person name="Yamazaki M."/>
            <person name="Ninomiya K."/>
            <person name="Ishibashi T."/>
            <person name="Yamashita H."/>
            <person name="Murakawa K."/>
            <person name="Fujimori K."/>
            <person name="Tanai H."/>
            <person name="Kimata M."/>
            <person name="Watanabe M."/>
            <person name="Hiraoka S."/>
            <person name="Chiba Y."/>
            <person name="Ishida S."/>
            <person name="Ono Y."/>
            <person name="Takiguchi S."/>
            <person name="Watanabe S."/>
            <person name="Yosida M."/>
            <person name="Hotuta T."/>
            <person name="Kusano J."/>
            <person name="Kanehori K."/>
            <person name="Takahashi-Fujii A."/>
            <person name="Hara H."/>
            <person name="Tanase T.-O."/>
            <person name="Nomura Y."/>
            <person name="Togiya S."/>
            <person name="Komai F."/>
            <person name="Hara R."/>
            <person name="Takeuchi K."/>
            <person name="Arita M."/>
            <person name="Imose N."/>
            <person name="Musashino K."/>
            <person name="Yuuki H."/>
            <person name="Oshima A."/>
            <person name="Sasaki N."/>
            <person name="Aotsuka S."/>
            <person name="Yoshikawa Y."/>
            <person name="Matsunawa H."/>
            <person name="Ichihara T."/>
            <person name="Shiohata N."/>
            <person name="Sano S."/>
            <person name="Moriya S."/>
            <person name="Momiyama H."/>
            <person name="Satoh N."/>
            <person name="Takami S."/>
            <person name="Terashima Y."/>
            <person name="Suzuki O."/>
            <person name="Nakagawa S."/>
            <person name="Senoh A."/>
            <person name="Mizoguchi H."/>
            <person name="Goto Y."/>
            <person name="Shimizu F."/>
            <person name="Wakebe H."/>
            <person name="Hishigaki H."/>
            <person name="Watanabe T."/>
            <person name="Sugiyama A."/>
            <person name="Takemoto M."/>
            <person name="Kawakami B."/>
            <person name="Yamazaki M."/>
            <person name="Watanabe K."/>
            <person name="Kumagai A."/>
            <person name="Itakura S."/>
            <person name="Fukuzumi Y."/>
            <person name="Fujimori Y."/>
            <person name="Komiyama M."/>
            <person name="Tashiro H."/>
            <person name="Tanigami A."/>
            <person name="Fujiwara T."/>
            <person name="Ono T."/>
            <person name="Yamada K."/>
            <person name="Fujii Y."/>
            <person name="Ozaki K."/>
            <person name="Hirao M."/>
            <person name="Ohmori Y."/>
            <person name="Kawabata A."/>
            <person name="Hikiji T."/>
            <person name="Kobatake N."/>
            <person name="Inagaki H."/>
            <person name="Ikema Y."/>
            <person name="Okamoto S."/>
            <person name="Okitani R."/>
            <person name="Kawakami T."/>
            <person name="Noguchi S."/>
            <person name="Itoh T."/>
            <person name="Shigeta K."/>
            <person name="Senba T."/>
            <person name="Matsumura K."/>
            <person name="Nakajima Y."/>
            <person name="Mizuno T."/>
            <person name="Morinaga M."/>
            <person name="Sasaki M."/>
            <person name="Togashi T."/>
            <person name="Oyama M."/>
            <person name="Hata H."/>
            <person name="Watanabe M."/>
            <person name="Komatsu T."/>
            <person name="Mizushima-Sugano J."/>
            <person name="Satoh T."/>
            <person name="Shirai Y."/>
            <person name="Takahashi Y."/>
            <person name="Nakagawa K."/>
            <person name="Okumura K."/>
            <person name="Nagase T."/>
            <person name="Nomura N."/>
            <person name="Kikuchi H."/>
            <person name="Masuho Y."/>
            <person name="Yamashita R."/>
            <person name="Nakai K."/>
            <person name="Yada T."/>
            <person name="Nakamura Y."/>
            <person name="Ohara O."/>
            <person name="Isogai T."/>
            <person name="Sugano S."/>
        </authorList>
    </citation>
    <scope>NUCLEOTIDE SEQUENCE [LARGE SCALE MRNA]</scope>
    <source>
        <tissue>Testis</tissue>
    </source>
</reference>
<reference key="3">
    <citation type="submission" date="2005-07" db="EMBL/GenBank/DDBJ databases">
        <authorList>
            <person name="Mural R.J."/>
            <person name="Istrail S."/>
            <person name="Sutton G.G."/>
            <person name="Florea L."/>
            <person name="Halpern A.L."/>
            <person name="Mobarry C.M."/>
            <person name="Lippert R."/>
            <person name="Walenz B."/>
            <person name="Shatkay H."/>
            <person name="Dew I."/>
            <person name="Miller J.R."/>
            <person name="Flanigan M.J."/>
            <person name="Edwards N.J."/>
            <person name="Bolanos R."/>
            <person name="Fasulo D."/>
            <person name="Halldorsson B.V."/>
            <person name="Hannenhalli S."/>
            <person name="Turner R."/>
            <person name="Yooseph S."/>
            <person name="Lu F."/>
            <person name="Nusskern D.R."/>
            <person name="Shue B.C."/>
            <person name="Zheng X.H."/>
            <person name="Zhong F."/>
            <person name="Delcher A.L."/>
            <person name="Huson D.H."/>
            <person name="Kravitz S.A."/>
            <person name="Mouchard L."/>
            <person name="Reinert K."/>
            <person name="Remington K.A."/>
            <person name="Clark A.G."/>
            <person name="Waterman M.S."/>
            <person name="Eichler E.E."/>
            <person name="Adams M.D."/>
            <person name="Hunkapiller M.W."/>
            <person name="Myers E.W."/>
            <person name="Venter J.C."/>
        </authorList>
    </citation>
    <scope>NUCLEOTIDE SEQUENCE [LARGE SCALE GENOMIC DNA]</scope>
</reference>
<reference key="4">
    <citation type="journal article" date="2004" name="Genome Res.">
        <title>The status, quality, and expansion of the NIH full-length cDNA project: the Mammalian Gene Collection (MGC).</title>
        <authorList>
            <consortium name="The MGC Project Team"/>
        </authorList>
    </citation>
    <scope>NUCLEOTIDE SEQUENCE [LARGE SCALE MRNA]</scope>
    <source>
        <tissue>Cerebellum</tissue>
    </source>
</reference>
<reference key="5">
    <citation type="journal article" date="1993" name="Nat. Genet.">
        <title>3,400 new expressed sequence tags identify diversity of transcripts in human brain.</title>
        <authorList>
            <person name="Adams M.D."/>
            <person name="Kerlavage A.R."/>
            <person name="Fields C."/>
            <person name="Venter J.C."/>
        </authorList>
    </citation>
    <scope>NUCLEOTIDE SEQUENCE [MRNA] OF 1-82</scope>
    <source>
        <tissue>Brain</tissue>
    </source>
</reference>
<reference key="6">
    <citation type="journal article" date="2017" name="Nat. Struct. Mol. Biol.">
        <title>Site-specific mapping of the human SUMO proteome reveals co-modification with phosphorylation.</title>
        <authorList>
            <person name="Hendriks I.A."/>
            <person name="Lyon D."/>
            <person name="Young C."/>
            <person name="Jensen L.J."/>
            <person name="Vertegaal A.C."/>
            <person name="Nielsen M.L."/>
        </authorList>
    </citation>
    <scope>SUMOYLATION [LARGE SCALE ANALYSIS] AT LYS-183 AND LYS-439</scope>
    <scope>IDENTIFICATION BY MASS SPECTROMETRY [LARGE SCALE ANALYSIS]</scope>
</reference>
<evidence type="ECO:0000255" key="1">
    <source>
        <dbReference type="PROSITE-ProRule" id="PRU00037"/>
    </source>
</evidence>
<evidence type="ECO:0000255" key="2">
    <source>
        <dbReference type="PROSITE-ProRule" id="PRU00042"/>
    </source>
</evidence>
<evidence type="ECO:0000256" key="3">
    <source>
        <dbReference type="SAM" id="MobiDB-lite"/>
    </source>
</evidence>
<evidence type="ECO:0000305" key="4"/>
<evidence type="ECO:0007744" key="5">
    <source>
    </source>
</evidence>